<name>MBOA5_MOUSE</name>
<organism>
    <name type="scientific">Mus musculus</name>
    <name type="common">Mouse</name>
    <dbReference type="NCBI Taxonomy" id="10090"/>
    <lineage>
        <taxon>Eukaryota</taxon>
        <taxon>Metazoa</taxon>
        <taxon>Chordata</taxon>
        <taxon>Craniata</taxon>
        <taxon>Vertebrata</taxon>
        <taxon>Euteleostomi</taxon>
        <taxon>Mammalia</taxon>
        <taxon>Eutheria</taxon>
        <taxon>Euarchontoglires</taxon>
        <taxon>Glires</taxon>
        <taxon>Rodentia</taxon>
        <taxon>Myomorpha</taxon>
        <taxon>Muroidea</taxon>
        <taxon>Muridae</taxon>
        <taxon>Murinae</taxon>
        <taxon>Mus</taxon>
        <taxon>Mus</taxon>
    </lineage>
</organism>
<sequence length="487" mass="56147">MASTADGDMGETLEQMRGLWPGVEDLSLNKLATSLGASEQALRLIFSIFLGYPLALFYRHYLFYKDSYLIHLFHTFTGLSIAYFNFGHQFYHSLLCVVLQFLILRLMGRTVTAVITTLCFQMAYLLAGYYYTATGDYDIKWTMPHCVLTLKLIGLCIDYYDGGKDGNSLTSEQQKYAIRGVPSLLEVAGFSYFYGAFLVGPQFSMNHYMKLVRGQLTDIPGKMPNSTIPALKRLSLGLVYLVGYTLLSPHITDDYLLTEDYDNRPFWFRCMYMLIWGKFVLYKYVTCWLVTEGVCILSGLGFNGFDENGTVRWDACANMKVWLFETTPRFNGTIASFNINTNAWVARYIFKRLKFLGNKELSQGLSLLFLALWHGLHSGYLICFQMEFLIVIVEKQVSSLIRDSPALSSLASITALQPFYYLVQQTIHWLFMGYSMTAFCLFTWDKWLKVYRSIYFLGHVFFLSLLFILPYIHKAMVPRKEKLKKRE</sequence>
<proteinExistence type="evidence at protein level"/>
<evidence type="ECO:0000250" key="1"/>
<evidence type="ECO:0000250" key="2">
    <source>
        <dbReference type="UniProtKB" id="Q6P1A2"/>
    </source>
</evidence>
<evidence type="ECO:0000255" key="3"/>
<evidence type="ECO:0000269" key="4">
    <source>
    </source>
</evidence>
<evidence type="ECO:0000269" key="5">
    <source>
    </source>
</evidence>
<evidence type="ECO:0000269" key="6">
    <source>
    </source>
</evidence>
<evidence type="ECO:0000269" key="7">
    <source>
    </source>
</evidence>
<evidence type="ECO:0000269" key="8">
    <source>
    </source>
</evidence>
<evidence type="ECO:0000269" key="9">
    <source>
    </source>
</evidence>
<evidence type="ECO:0000269" key="10">
    <source>
    </source>
</evidence>
<evidence type="ECO:0000305" key="11"/>
<evidence type="ECO:0000305" key="12">
    <source>
    </source>
</evidence>
<evidence type="ECO:0000305" key="13">
    <source>
    </source>
</evidence>
<evidence type="ECO:0000312" key="14">
    <source>
        <dbReference type="EMBL" id="AAC36007.1"/>
    </source>
</evidence>
<evidence type="ECO:0000312" key="15">
    <source>
        <dbReference type="EMBL" id="AAH06753.2"/>
    </source>
</evidence>
<evidence type="ECO:0000312" key="16">
    <source>
        <dbReference type="EMBL" id="AAK20915.1"/>
    </source>
</evidence>
<evidence type="ECO:0000312" key="17">
    <source>
        <dbReference type="EMBL" id="BAC38993.1"/>
    </source>
</evidence>
<evidence type="ECO:0000312" key="18">
    <source>
        <dbReference type="MGI" id="MGI:1315211"/>
    </source>
</evidence>
<feature type="initiator methionine" description="Removed" evidence="2">
    <location>
        <position position="1"/>
    </location>
</feature>
<feature type="chain" id="PRO_0000233383" description="Lysophospholipid acyltransferase 5">
    <location>
        <begin position="2"/>
        <end position="487"/>
    </location>
</feature>
<feature type="transmembrane region" description="Helical" evidence="3">
    <location>
        <begin position="44"/>
        <end position="64"/>
    </location>
</feature>
<feature type="transmembrane region" description="Helical" evidence="3">
    <location>
        <begin position="84"/>
        <end position="104"/>
    </location>
</feature>
<feature type="transmembrane region" description="Helical" evidence="3">
    <location>
        <begin position="111"/>
        <end position="131"/>
    </location>
</feature>
<feature type="transmembrane region" description="Helical" evidence="3">
    <location>
        <begin position="180"/>
        <end position="200"/>
    </location>
</feature>
<feature type="transmembrane region" description="Helical" evidence="3">
    <location>
        <begin position="236"/>
        <end position="256"/>
    </location>
</feature>
<feature type="transmembrane region" description="Helical" evidence="3">
    <location>
        <begin position="285"/>
        <end position="305"/>
    </location>
</feature>
<feature type="transmembrane region" description="Helical" evidence="3">
    <location>
        <begin position="364"/>
        <end position="384"/>
    </location>
</feature>
<feature type="transmembrane region" description="Helical" evidence="3">
    <location>
        <begin position="422"/>
        <end position="442"/>
    </location>
</feature>
<feature type="transmembrane region" description="Helical" evidence="3">
    <location>
        <begin position="453"/>
        <end position="473"/>
    </location>
</feature>
<feature type="short sequence motif" description="Di-lysine motif">
    <location>
        <begin position="484"/>
        <end position="487"/>
    </location>
</feature>
<feature type="active site" evidence="1">
    <location>
        <position position="338"/>
    </location>
</feature>
<feature type="active site" evidence="1">
    <location>
        <position position="374"/>
    </location>
</feature>
<feature type="modified residue" description="N-acetylalanine" evidence="2">
    <location>
        <position position="2"/>
    </location>
</feature>
<feature type="glycosylation site" description="N-linked (GlcNAc...) asparagine" evidence="3">
    <location>
        <position position="225"/>
    </location>
</feature>
<feature type="glycosylation site" description="N-linked (GlcNAc...) asparagine" evidence="3">
    <location>
        <position position="308"/>
    </location>
</feature>
<feature type="glycosylation site" description="N-linked (GlcNAc...) asparagine" evidence="3">
    <location>
        <position position="331"/>
    </location>
</feature>
<feature type="mutagenesis site" description="Loss of O-acyltransferase activity." evidence="7">
    <original>H</original>
    <variation>A</variation>
    <location>
        <position position="374"/>
    </location>
</feature>
<feature type="sequence conflict" description="In Ref. 5; AAC36007." evidence="11" ref="5">
    <original>IF</original>
    <variation>SH</variation>
    <location>
        <begin position="48"/>
        <end position="49"/>
    </location>
</feature>
<reference evidence="16" key="1">
    <citation type="submission" date="2001-03" db="EMBL/GenBank/DDBJ databases">
        <title>Cloning and initial characterization of mouse PTG cDNA, whose expression is in a PPAR alpha dependent manner.</title>
        <authorList>
            <person name="Zhu Y."/>
            <person name="Han Y."/>
            <person name="Reddy J.K."/>
        </authorList>
    </citation>
    <scope>NUCLEOTIDE SEQUENCE [MRNA]</scope>
    <source>
        <strain evidence="16">C57BL/6J</strain>
        <tissue evidence="16">Liver</tissue>
    </source>
</reference>
<reference key="2">
    <citation type="journal article" date="2008" name="Proc. Natl. Acad. Sci. U.S.A.">
        <title>Discovery of a lysophospholipid acyltransferase family essential for membrane asymmetry and diversity.</title>
        <authorList>
            <person name="Hishikawa D."/>
            <person name="Shindou H."/>
            <person name="Kobayashi S."/>
            <person name="Nakanishi H."/>
            <person name="Taguchi R."/>
            <person name="Shimizu T."/>
        </authorList>
    </citation>
    <scope>NUCLEOTIDE SEQUENCE [MRNA]</scope>
    <scope>FUNCTION</scope>
    <scope>CATALYTIC ACTIVITY</scope>
    <scope>BIOPHYSICOCHEMICAL PROPERTIES</scope>
    <scope>PATHWAY</scope>
    <scope>SUBCELLULAR LOCATION</scope>
    <scope>TISSUE SPECIFICITY</scope>
</reference>
<reference evidence="16" key="3">
    <citation type="submission" date="2005-07" db="EMBL/GenBank/DDBJ databases">
        <authorList>
            <person name="Mural R.J."/>
            <person name="Adams M.D."/>
            <person name="Myers E.W."/>
            <person name="Smith H.O."/>
            <person name="Venter J.C."/>
        </authorList>
    </citation>
    <scope>NUCLEOTIDE SEQUENCE [LARGE SCALE GENOMIC DNA]</scope>
</reference>
<reference evidence="15" key="4">
    <citation type="journal article" date="2004" name="Genome Res.">
        <title>The status, quality, and expansion of the NIH full-length cDNA project: the Mammalian Gene Collection (MGC).</title>
        <authorList>
            <consortium name="The MGC Project Team"/>
        </authorList>
    </citation>
    <scope>NUCLEOTIDE SEQUENCE [LARGE SCALE MRNA]</scope>
    <source>
        <strain evidence="15">FVB/N</strain>
        <tissue evidence="15">Mammary gland</tissue>
    </source>
</reference>
<reference evidence="11 14" key="5">
    <citation type="journal article" date="1998" name="Genome Res.">
        <title>Comparative sequence analysis of a gene-rich cluster at human chromosome 12p13 and its syntenic region in mouse chromosome 6.</title>
        <authorList>
            <person name="Ansari-Lari M.A."/>
            <person name="Oeltjen J.C."/>
            <person name="Schwartz S."/>
            <person name="Zhang Z."/>
            <person name="Muzny D.M."/>
            <person name="Lu J."/>
            <person name="Gorrell J.H."/>
            <person name="Chinault A.C."/>
            <person name="Belmont J.W."/>
            <person name="Miller W."/>
            <person name="Gibbs R.A."/>
        </authorList>
    </citation>
    <scope>NUCLEOTIDE SEQUENCE [GENOMIC DNA] OF 48-487</scope>
</reference>
<reference evidence="11 17" key="6">
    <citation type="journal article" date="2005" name="Science">
        <title>The transcriptional landscape of the mammalian genome.</title>
        <authorList>
            <person name="Carninci P."/>
            <person name="Kasukawa T."/>
            <person name="Katayama S."/>
            <person name="Gough J."/>
            <person name="Frith M.C."/>
            <person name="Maeda N."/>
            <person name="Oyama R."/>
            <person name="Ravasi T."/>
            <person name="Lenhard B."/>
            <person name="Wells C."/>
            <person name="Kodzius R."/>
            <person name="Shimokawa K."/>
            <person name="Bajic V.B."/>
            <person name="Brenner S.E."/>
            <person name="Batalov S."/>
            <person name="Forrest A.R."/>
            <person name="Zavolan M."/>
            <person name="Davis M.J."/>
            <person name="Wilming L.G."/>
            <person name="Aidinis V."/>
            <person name="Allen J.E."/>
            <person name="Ambesi-Impiombato A."/>
            <person name="Apweiler R."/>
            <person name="Aturaliya R.N."/>
            <person name="Bailey T.L."/>
            <person name="Bansal M."/>
            <person name="Baxter L."/>
            <person name="Beisel K.W."/>
            <person name="Bersano T."/>
            <person name="Bono H."/>
            <person name="Chalk A.M."/>
            <person name="Chiu K.P."/>
            <person name="Choudhary V."/>
            <person name="Christoffels A."/>
            <person name="Clutterbuck D.R."/>
            <person name="Crowe M.L."/>
            <person name="Dalla E."/>
            <person name="Dalrymple B.P."/>
            <person name="de Bono B."/>
            <person name="Della Gatta G."/>
            <person name="di Bernardo D."/>
            <person name="Down T."/>
            <person name="Engstrom P."/>
            <person name="Fagiolini M."/>
            <person name="Faulkner G."/>
            <person name="Fletcher C.F."/>
            <person name="Fukushima T."/>
            <person name="Furuno M."/>
            <person name="Futaki S."/>
            <person name="Gariboldi M."/>
            <person name="Georgii-Hemming P."/>
            <person name="Gingeras T.R."/>
            <person name="Gojobori T."/>
            <person name="Green R.E."/>
            <person name="Gustincich S."/>
            <person name="Harbers M."/>
            <person name="Hayashi Y."/>
            <person name="Hensch T.K."/>
            <person name="Hirokawa N."/>
            <person name="Hill D."/>
            <person name="Huminiecki L."/>
            <person name="Iacono M."/>
            <person name="Ikeo K."/>
            <person name="Iwama A."/>
            <person name="Ishikawa T."/>
            <person name="Jakt M."/>
            <person name="Kanapin A."/>
            <person name="Katoh M."/>
            <person name="Kawasawa Y."/>
            <person name="Kelso J."/>
            <person name="Kitamura H."/>
            <person name="Kitano H."/>
            <person name="Kollias G."/>
            <person name="Krishnan S.P."/>
            <person name="Kruger A."/>
            <person name="Kummerfeld S.K."/>
            <person name="Kurochkin I.V."/>
            <person name="Lareau L.F."/>
            <person name="Lazarevic D."/>
            <person name="Lipovich L."/>
            <person name="Liu J."/>
            <person name="Liuni S."/>
            <person name="McWilliam S."/>
            <person name="Madan Babu M."/>
            <person name="Madera M."/>
            <person name="Marchionni L."/>
            <person name="Matsuda H."/>
            <person name="Matsuzawa S."/>
            <person name="Miki H."/>
            <person name="Mignone F."/>
            <person name="Miyake S."/>
            <person name="Morris K."/>
            <person name="Mottagui-Tabar S."/>
            <person name="Mulder N."/>
            <person name="Nakano N."/>
            <person name="Nakauchi H."/>
            <person name="Ng P."/>
            <person name="Nilsson R."/>
            <person name="Nishiguchi S."/>
            <person name="Nishikawa S."/>
            <person name="Nori F."/>
            <person name="Ohara O."/>
            <person name="Okazaki Y."/>
            <person name="Orlando V."/>
            <person name="Pang K.C."/>
            <person name="Pavan W.J."/>
            <person name="Pavesi G."/>
            <person name="Pesole G."/>
            <person name="Petrovsky N."/>
            <person name="Piazza S."/>
            <person name="Reed J."/>
            <person name="Reid J.F."/>
            <person name="Ring B.Z."/>
            <person name="Ringwald M."/>
            <person name="Rost B."/>
            <person name="Ruan Y."/>
            <person name="Salzberg S.L."/>
            <person name="Sandelin A."/>
            <person name="Schneider C."/>
            <person name="Schoenbach C."/>
            <person name="Sekiguchi K."/>
            <person name="Semple C.A."/>
            <person name="Seno S."/>
            <person name="Sessa L."/>
            <person name="Sheng Y."/>
            <person name="Shibata Y."/>
            <person name="Shimada H."/>
            <person name="Shimada K."/>
            <person name="Silva D."/>
            <person name="Sinclair B."/>
            <person name="Sperling S."/>
            <person name="Stupka E."/>
            <person name="Sugiura K."/>
            <person name="Sultana R."/>
            <person name="Takenaka Y."/>
            <person name="Taki K."/>
            <person name="Tammoja K."/>
            <person name="Tan S.L."/>
            <person name="Tang S."/>
            <person name="Taylor M.S."/>
            <person name="Tegner J."/>
            <person name="Teichmann S.A."/>
            <person name="Ueda H.R."/>
            <person name="van Nimwegen E."/>
            <person name="Verardo R."/>
            <person name="Wei C.L."/>
            <person name="Yagi K."/>
            <person name="Yamanishi H."/>
            <person name="Zabarovsky E."/>
            <person name="Zhu S."/>
            <person name="Zimmer A."/>
            <person name="Hide W."/>
            <person name="Bult C."/>
            <person name="Grimmond S.M."/>
            <person name="Teasdale R.D."/>
            <person name="Liu E.T."/>
            <person name="Brusic V."/>
            <person name="Quackenbush J."/>
            <person name="Wahlestedt C."/>
            <person name="Mattick J.S."/>
            <person name="Hume D.A."/>
            <person name="Kai C."/>
            <person name="Sasaki D."/>
            <person name="Tomaru Y."/>
            <person name="Fukuda S."/>
            <person name="Kanamori-Katayama M."/>
            <person name="Suzuki M."/>
            <person name="Aoki J."/>
            <person name="Arakawa T."/>
            <person name="Iida J."/>
            <person name="Imamura K."/>
            <person name="Itoh M."/>
            <person name="Kato T."/>
            <person name="Kawaji H."/>
            <person name="Kawagashira N."/>
            <person name="Kawashima T."/>
            <person name="Kojima M."/>
            <person name="Kondo S."/>
            <person name="Konno H."/>
            <person name="Nakano K."/>
            <person name="Ninomiya N."/>
            <person name="Nishio T."/>
            <person name="Okada M."/>
            <person name="Plessy C."/>
            <person name="Shibata K."/>
            <person name="Shiraki T."/>
            <person name="Suzuki S."/>
            <person name="Tagami M."/>
            <person name="Waki K."/>
            <person name="Watahiki A."/>
            <person name="Okamura-Oho Y."/>
            <person name="Suzuki H."/>
            <person name="Kawai J."/>
            <person name="Hayashizaki Y."/>
        </authorList>
    </citation>
    <scope>NUCLEOTIDE SEQUENCE [LARGE SCALE MRNA] OF 114-487</scope>
    <source>
        <strain evidence="17">C57BL/6J</strain>
    </source>
</reference>
<reference key="7">
    <citation type="journal article" date="2010" name="Cell">
        <title>A tissue-specific atlas of mouse protein phosphorylation and expression.</title>
        <authorList>
            <person name="Huttlin E.L."/>
            <person name="Jedrychowski M.P."/>
            <person name="Elias J.E."/>
            <person name="Goswami T."/>
            <person name="Rad R."/>
            <person name="Beausoleil S.A."/>
            <person name="Villen J."/>
            <person name="Haas W."/>
            <person name="Sowa M.E."/>
            <person name="Gygi S.P."/>
        </authorList>
    </citation>
    <scope>IDENTIFICATION BY MASS SPECTROMETRY [LARGE SCALE ANALYSIS]</scope>
    <source>
        <tissue>Heart</tissue>
        <tissue>Kidney</tissue>
        <tissue>Liver</tissue>
        <tissue>Lung</tissue>
        <tissue>Pancreas</tissue>
        <tissue>Spleen</tissue>
        <tissue>Testis</tissue>
    </source>
</reference>
<reference key="8">
    <citation type="journal article" date="2013" name="Cell Metab.">
        <title>LXRs regulate ER stress and inflammation through dynamic modulation of membrane phospholipid composition.</title>
        <authorList>
            <person name="Rong X."/>
            <person name="Albert C.J."/>
            <person name="Hong C."/>
            <person name="Duerr M.A."/>
            <person name="Chamberlain B.T."/>
            <person name="Tarling E.J."/>
            <person name="Ito A."/>
            <person name="Gao J."/>
            <person name="Wang B."/>
            <person name="Edwards P.A."/>
            <person name="Jung M.E."/>
            <person name="Ford D.A."/>
            <person name="Tontonoz P."/>
        </authorList>
    </citation>
    <scope>FUNCTION</scope>
    <scope>TISSUE SPECIFICITY</scope>
    <scope>INDUCTION</scope>
</reference>
<reference key="9">
    <citation type="journal article" date="2015" name="Elife">
        <title>Fatty acid remodeling by LPCAT3 enriches arachidonate in phospholipid membranes and regulates triglyceride transport.</title>
        <authorList>
            <person name="Hashidate-Yoshida T."/>
            <person name="Harayama T."/>
            <person name="Hishikawa D."/>
            <person name="Morimoto R."/>
            <person name="Hamano F."/>
            <person name="Tokuoka S.M."/>
            <person name="Eto M."/>
            <person name="Tamura-Nakano M."/>
            <person name="Yanobu-Takanashi R."/>
            <person name="Mukumoto Y."/>
            <person name="Kiyonari H."/>
            <person name="Okamura T."/>
            <person name="Kita Y."/>
            <person name="Shindou H."/>
            <person name="Shimizu T."/>
        </authorList>
    </citation>
    <scope>FUNCTION</scope>
    <scope>CATALYTIC ACTIVITY</scope>
    <scope>PATHWAY</scope>
    <scope>TISSUE SPECIFICITY</scope>
    <scope>INDUCTION</scope>
    <scope>DEVELOPMENTAL STAGE</scope>
    <scope>DISRUPTION PHENOTYPE</scope>
    <scope>MUTAGENESIS OF HIS-374</scope>
</reference>
<reference key="10">
    <citation type="journal article" date="2015" name="Elife">
        <title>Lpcat3-dependent production of arachidonoyl phospholipids is a key determinant of triglyceride secretion.</title>
        <authorList>
            <person name="Rong X."/>
            <person name="Wang B."/>
            <person name="Dunham M.M."/>
            <person name="Hedde P.N."/>
            <person name="Wong J.S."/>
            <person name="Gratton E."/>
            <person name="Young S.G."/>
            <person name="Ford D.A."/>
            <person name="Tontonoz P."/>
        </authorList>
    </citation>
    <scope>FUNCTION</scope>
    <scope>TISSUE SPECIFICITY</scope>
    <scope>INDUCTION</scope>
    <scope>DISRUPTION PHENOTYPE</scope>
</reference>
<reference key="11">
    <citation type="journal article" date="2016" name="Cell Metab.">
        <title>Intestinal Phospholipid Remodeling Is Required for Dietary-Lipid Uptake and Survival on a High-Fat Diet.</title>
        <authorList>
            <person name="Wang B."/>
            <person name="Rong X."/>
            <person name="Duerr M.A."/>
            <person name="Hermanson D.J."/>
            <person name="Hedde P.N."/>
            <person name="Wong J.S."/>
            <person name="Vallim T.Q."/>
            <person name="Cravatt B.F."/>
            <person name="Gratton E."/>
            <person name="Ford D.A."/>
            <person name="Tontonoz P."/>
        </authorList>
    </citation>
    <scope>FUNCTION</scope>
</reference>
<reference key="12">
    <citation type="journal article" date="2017" name="J. Clin. Invest.">
        <title>ER phospholipid composition modulates lipogenesis during feeding and in obesity.</title>
        <authorList>
            <person name="Rong X."/>
            <person name="Wang B."/>
            <person name="Palladino E.N."/>
            <person name="de Aguiar Vallim T.Q."/>
            <person name="Ford D.A."/>
            <person name="Tontonoz P."/>
        </authorList>
    </citation>
    <scope>FUNCTION</scope>
    <scope>TISSUE SPECIFICITY</scope>
    <scope>INDUCTION</scope>
</reference>
<reference key="13">
    <citation type="journal article" date="2018" name="Cell Stem Cell">
        <title>Phospholipid Remodeling and Cholesterol Availability Regulate Intestinal Stemness and Tumorigenesis.</title>
        <authorList>
            <person name="Wang B."/>
            <person name="Rong X."/>
            <person name="Palladino E.N.D."/>
            <person name="Wang J."/>
            <person name="Fogelman A.M."/>
            <person name="Martin M.G."/>
            <person name="Alrefai W.A."/>
            <person name="Ford D.A."/>
            <person name="Tontonoz P."/>
        </authorList>
    </citation>
    <scope>FUNCTION</scope>
    <scope>DISRUPTION PHENOTYPE</scope>
</reference>
<keyword id="KW-0007">Acetylation</keyword>
<keyword id="KW-0012">Acyltransferase</keyword>
<keyword id="KW-0256">Endoplasmic reticulum</keyword>
<keyword id="KW-0325">Glycoprotein</keyword>
<keyword id="KW-0444">Lipid biosynthesis</keyword>
<keyword id="KW-0443">Lipid metabolism</keyword>
<keyword id="KW-0472">Membrane</keyword>
<keyword id="KW-0594">Phospholipid biosynthesis</keyword>
<keyword id="KW-1208">Phospholipid metabolism</keyword>
<keyword id="KW-1185">Reference proteome</keyword>
<keyword id="KW-0808">Transferase</keyword>
<keyword id="KW-0812">Transmembrane</keyword>
<keyword id="KW-1133">Transmembrane helix</keyword>
<gene>
    <name type="primary">Lpcat3</name>
    <name evidence="18" type="synonym">Grcc3f</name>
    <name type="synonym">Mboat5</name>
    <name type="synonym">Oact5</name>
</gene>
<accession>Q91V01</accession>
<accession>B1B362</accession>
<accession>O35131</accession>
<accession>Q8BNH6</accession>
<comment type="function">
    <text evidence="4 5 6 7 8 9 10">Lysophospholipid O-acyltransferase (LPLAT) that catalyzes the reacylation step of the phospholipid remodeling process also known as the Lands cycle (PubMed:18287005, PubMed:25898003). Catalyzes transfer of the fatty acyl chain from fatty acyl-CoA to 1-acyl lysophospholipid to form various classes of phospholipids. Converts 1-acyl lysophosphatidylcholine (LPC) into phosphatidylcholine (PC) (LPCAT activity), 1-acyl lysophosphatidylserine (LPS) into phosphatidylserine (PS) (LPSAT activity) and 1-acyl lysophosphatidylethanolamine (LPE) into phosphatidylethanolamine (PE) (LPEAT activity). Favors polyunsaturated fatty acyl-CoAs as acyl donors compared to saturated fatty acyl-CoAs (PubMed:18287005, PubMed:25898003). Has higher activity for LPC acyl acceptors compared to LPEs and LPSs (PubMed:18287005). Can also transfer the fatty acyl chain from fatty acyl-CoA to 1-O-alkyl lysophospholipid or 1-O-alkenyl lysophospholipid with lower efficiency (PubMed:18287005). Acts as a major LPC O-acyltransferase in liver and intestine (PubMed:25898003, PubMed:26833026). As a component of the liver X receptor/NR1H3 or NR1H2 signaling pathway, mainly catalyzes the incorporation of arachidonate into PCs of endoplasmic reticulum (ER) membranes, increasing membrane dynamics and enabling triacylglycerols transfer to nascent very low-density lipoprotein (VLDL) particles (PubMed:25806685). Promotes processing of sterol regulatory protein SREBF1 in hepatocytes, likely by facilitating the translocation of SREBF1-SCAP complex from ER to the Golgi apparatus (PubMed:28846071). Participates in mechanisms by which the liver X receptor/NR1H3 or NR1H2 signaling pathway counteracts lipid-induced ER stress response and inflammation (PubMed:24206663). Down-regulates hepatic inflammation by limiting arachidonic acid availability for synthesis of inflammatory eicosanoids, such as prostaglandins (PubMed:24206663). In enterocytes, acts as a component of a gut-brain feedback loop that coordinates dietary lipid absorption and food intake. Regulates the abundance of PCs containing linoleate and arachidonate in enterocyte membranes, enabling passive diffusion of fatty acids and cholesterol across the membrane for efficient chylomicron assembly (PubMed:26833026). In the intestinal crypt, acts as a component of dietary-responsive phospholipid-cholesterol axis, regulating the biosynthesis of cholesterol and its mitogenic effects on intestinal stem cells (PubMed:29395055).</text>
</comment>
<comment type="catalytic activity">
    <reaction evidence="4 7">
        <text>a 1-acyl-sn-glycero-3-phosphocholine + an acyl-CoA = a 1,2-diacyl-sn-glycero-3-phosphocholine + CoA</text>
        <dbReference type="Rhea" id="RHEA:12937"/>
        <dbReference type="ChEBI" id="CHEBI:57287"/>
        <dbReference type="ChEBI" id="CHEBI:57643"/>
        <dbReference type="ChEBI" id="CHEBI:58168"/>
        <dbReference type="ChEBI" id="CHEBI:58342"/>
        <dbReference type="EC" id="2.3.1.23"/>
    </reaction>
    <physiologicalReaction direction="left-to-right" evidence="12 13">
        <dbReference type="Rhea" id="RHEA:12938"/>
    </physiologicalReaction>
</comment>
<comment type="catalytic activity">
    <reaction evidence="4">
        <text>a 1-acyl-sn-glycero-3-phosphoethanolamine + an acyl-CoA = a 1,2-diacyl-sn-glycero-3-phosphoethanolamine + CoA</text>
        <dbReference type="Rhea" id="RHEA:32995"/>
        <dbReference type="ChEBI" id="CHEBI:57287"/>
        <dbReference type="ChEBI" id="CHEBI:58342"/>
        <dbReference type="ChEBI" id="CHEBI:64381"/>
        <dbReference type="ChEBI" id="CHEBI:64612"/>
        <dbReference type="EC" id="2.3.1.n7"/>
    </reaction>
    <physiologicalReaction direction="left-to-right" evidence="12">
        <dbReference type="Rhea" id="RHEA:32996"/>
    </physiologicalReaction>
</comment>
<comment type="catalytic activity">
    <reaction evidence="4">
        <text>a 1-acyl-sn-glycero-3-phospho-L-serine + an acyl-CoA = a 1,2-diacyl-sn-glycero-3-phospho-L-serine + CoA</text>
        <dbReference type="Rhea" id="RHEA:33191"/>
        <dbReference type="ChEBI" id="CHEBI:57262"/>
        <dbReference type="ChEBI" id="CHEBI:57287"/>
        <dbReference type="ChEBI" id="CHEBI:58342"/>
        <dbReference type="ChEBI" id="CHEBI:64379"/>
        <dbReference type="EC" id="2.3.1.n6"/>
    </reaction>
    <physiologicalReaction direction="left-to-right" evidence="12">
        <dbReference type="Rhea" id="RHEA:33192"/>
    </physiologicalReaction>
</comment>
<comment type="catalytic activity">
    <reaction evidence="2">
        <text>(9Z,12Z)-octadecadienoyl-CoA + a 1-acyl-sn-glycero-3-phosphocholine = 1-acyl-2-(9Z,12Z)-octadecadienoyl-sn-glycero-3-phosphocholine + CoA</text>
        <dbReference type="Rhea" id="RHEA:37563"/>
        <dbReference type="ChEBI" id="CHEBI:57287"/>
        <dbReference type="ChEBI" id="CHEBI:57383"/>
        <dbReference type="ChEBI" id="CHEBI:58168"/>
        <dbReference type="ChEBI" id="CHEBI:60000"/>
    </reaction>
    <physiologicalReaction direction="left-to-right" evidence="2">
        <dbReference type="Rhea" id="RHEA:37564"/>
    </physiologicalReaction>
</comment>
<comment type="catalytic activity">
    <reaction evidence="2">
        <text>(5Z,8Z,11Z,14Z)-eicosatetraenoyl-CoA + a 1-acyl-sn-glycero-3-phosphocholine = 1-acyl-2-(5Z,8Z,11Z,14Z-eicosatetraenoyl)-sn-glycero-3-phosphocholine + CoA</text>
        <dbReference type="Rhea" id="RHEA:37559"/>
        <dbReference type="ChEBI" id="CHEBI:57287"/>
        <dbReference type="ChEBI" id="CHEBI:57368"/>
        <dbReference type="ChEBI" id="CHEBI:58168"/>
        <dbReference type="ChEBI" id="CHEBI:75063"/>
    </reaction>
    <physiologicalReaction direction="left-to-right" evidence="2">
        <dbReference type="Rhea" id="RHEA:37560"/>
    </physiologicalReaction>
</comment>
<comment type="catalytic activity">
    <reaction evidence="2">
        <text>dodecanoyl-CoA + 1-hexadecanoyl-sn-glycero-3-phosphocholine = 1-hexadecanoyl-2-dodecanoyl-sn-glycero-3-phosphocholine + CoA</text>
        <dbReference type="Rhea" id="RHEA:37515"/>
        <dbReference type="ChEBI" id="CHEBI:57287"/>
        <dbReference type="ChEBI" id="CHEBI:57375"/>
        <dbReference type="ChEBI" id="CHEBI:72998"/>
        <dbReference type="ChEBI" id="CHEBI:75018"/>
    </reaction>
    <physiologicalReaction direction="left-to-right" evidence="2">
        <dbReference type="Rhea" id="RHEA:37516"/>
    </physiologicalReaction>
</comment>
<comment type="catalytic activity">
    <reaction evidence="2">
        <text>octadecanoyl-CoA + 1-hexadecanoyl-sn-glycero-3-phosphocholine = 1-hexadecanoyl-2-octadecanoyl-sn-glycero-3-phosphocholine + CoA</text>
        <dbReference type="Rhea" id="RHEA:35987"/>
        <dbReference type="ChEBI" id="CHEBI:57287"/>
        <dbReference type="ChEBI" id="CHEBI:57394"/>
        <dbReference type="ChEBI" id="CHEBI:72998"/>
        <dbReference type="ChEBI" id="CHEBI:73000"/>
    </reaction>
    <physiologicalReaction direction="left-to-right" evidence="2">
        <dbReference type="Rhea" id="RHEA:35988"/>
    </physiologicalReaction>
</comment>
<comment type="catalytic activity">
    <reaction evidence="2">
        <text>1-dodecanoyl-sn-glycero-3-phosphocholine + hexadecanoyl-CoA = 1-dodecanoyl-2-hexadecanoyl-sn-glycero-3-phosphocholine + CoA</text>
        <dbReference type="Rhea" id="RHEA:37511"/>
        <dbReference type="ChEBI" id="CHEBI:57287"/>
        <dbReference type="ChEBI" id="CHEBI:57379"/>
        <dbReference type="ChEBI" id="CHEBI:74966"/>
        <dbReference type="ChEBI" id="CHEBI:75017"/>
    </reaction>
    <physiologicalReaction direction="left-to-right" evidence="2">
        <dbReference type="Rhea" id="RHEA:37512"/>
    </physiologicalReaction>
</comment>
<comment type="catalytic activity">
    <reaction evidence="2">
        <text>1-tetradecanoyl-sn-glycero-3-phosphocholine + hexadecanoyl-CoA = 1-tetradecanoyl-2-hexadecanoyl-sn-glycero-3-phosphocholine + CoA</text>
        <dbReference type="Rhea" id="RHEA:37655"/>
        <dbReference type="ChEBI" id="CHEBI:57287"/>
        <dbReference type="ChEBI" id="CHEBI:57379"/>
        <dbReference type="ChEBI" id="CHEBI:64489"/>
        <dbReference type="ChEBI" id="CHEBI:75062"/>
    </reaction>
    <physiologicalReaction direction="left-to-right" evidence="2">
        <dbReference type="Rhea" id="RHEA:37656"/>
    </physiologicalReaction>
</comment>
<comment type="catalytic activity">
    <reaction evidence="2">
        <text>1-hexadecanoyl-sn-glycero-3-phosphocholine + hexadecanoyl-CoA = 1,2-dihexadecanoyl-sn-glycero-3-phosphocholine + CoA</text>
        <dbReference type="Rhea" id="RHEA:35983"/>
        <dbReference type="ChEBI" id="CHEBI:57287"/>
        <dbReference type="ChEBI" id="CHEBI:57379"/>
        <dbReference type="ChEBI" id="CHEBI:72998"/>
        <dbReference type="ChEBI" id="CHEBI:72999"/>
    </reaction>
    <physiologicalReaction direction="left-to-right" evidence="2">
        <dbReference type="Rhea" id="RHEA:35984"/>
    </physiologicalReaction>
</comment>
<comment type="catalytic activity">
    <reaction evidence="2">
        <text>1-octadecanoyl-sn-glycero-3-phosphocholine + hexadecanoyl-CoA = 1-octadecanoyl-2-hexadecanoyl-sn-glycero-3-phosphocholine + CoA</text>
        <dbReference type="Rhea" id="RHEA:37527"/>
        <dbReference type="ChEBI" id="CHEBI:57287"/>
        <dbReference type="ChEBI" id="CHEBI:57379"/>
        <dbReference type="ChEBI" id="CHEBI:73858"/>
        <dbReference type="ChEBI" id="CHEBI:75026"/>
    </reaction>
    <physiologicalReaction direction="left-to-right" evidence="2">
        <dbReference type="Rhea" id="RHEA:37528"/>
    </physiologicalReaction>
</comment>
<comment type="catalytic activity">
    <reaction evidence="2">
        <text>1-(9Z-octadecenoyl)-sn-glycero-3-phosphocholine + hexadecanoyl-CoA = 1-(9Z-octadecenoyl)-2-hexadecanoyl-sn-glycero-3-phosphocholine + CoA</text>
        <dbReference type="Rhea" id="RHEA:37383"/>
        <dbReference type="ChEBI" id="CHEBI:28610"/>
        <dbReference type="ChEBI" id="CHEBI:57287"/>
        <dbReference type="ChEBI" id="CHEBI:57379"/>
        <dbReference type="ChEBI" id="CHEBI:74667"/>
    </reaction>
    <physiologicalReaction direction="left-to-right" evidence="2">
        <dbReference type="Rhea" id="RHEA:37384"/>
    </physiologicalReaction>
</comment>
<comment type="catalytic activity">
    <reaction evidence="2">
        <text>(9Z)-hexadecenoyl-CoA + 1-hexadecanoyl-sn-glycero-3-phosphocholine = 1-hexadecanoyl-2-(9Z-hexadecenoyl)-sn-glycero-3-phosphocholine + CoA</text>
        <dbReference type="Rhea" id="RHEA:37207"/>
        <dbReference type="ChEBI" id="CHEBI:57287"/>
        <dbReference type="ChEBI" id="CHEBI:61540"/>
        <dbReference type="ChEBI" id="CHEBI:72998"/>
        <dbReference type="ChEBI" id="CHEBI:74000"/>
    </reaction>
    <physiologicalReaction direction="left-to-right" evidence="2">
        <dbReference type="Rhea" id="RHEA:37208"/>
    </physiologicalReaction>
</comment>
<comment type="catalytic activity">
    <reaction evidence="4">
        <text>1-hexadecanoyl-sn-glycero-3-phosphocholine + (9Z)-octadecenoyl-CoA = 1-hexadecanoyl-2-(9Z-octadecenoyl)-sn-glycero-3-phosphocholine + CoA</text>
        <dbReference type="Rhea" id="RHEA:35991"/>
        <dbReference type="ChEBI" id="CHEBI:57287"/>
        <dbReference type="ChEBI" id="CHEBI:57387"/>
        <dbReference type="ChEBI" id="CHEBI:72998"/>
        <dbReference type="ChEBI" id="CHEBI:73001"/>
    </reaction>
    <physiologicalReaction direction="left-to-right" evidence="12">
        <dbReference type="Rhea" id="RHEA:35992"/>
    </physiologicalReaction>
</comment>
<comment type="catalytic activity">
    <reaction evidence="4 7">
        <text>(9Z,12Z)-octadecadienoyl-CoA + 1-hexadecanoyl-sn-glycero-3-phosphocholine = 1-hexadecanoyl-2-(9Z,12Z-octadecadienoyl)-sn-glycero-3-phosphocholine + CoA</text>
        <dbReference type="Rhea" id="RHEA:35995"/>
        <dbReference type="ChEBI" id="CHEBI:57287"/>
        <dbReference type="ChEBI" id="CHEBI:57383"/>
        <dbReference type="ChEBI" id="CHEBI:72998"/>
        <dbReference type="ChEBI" id="CHEBI:73002"/>
    </reaction>
    <physiologicalReaction direction="left-to-right" evidence="12 13">
        <dbReference type="Rhea" id="RHEA:35996"/>
    </physiologicalReaction>
</comment>
<comment type="catalytic activity">
    <reaction evidence="4">
        <text>1-dodecanoyl-sn-glycero-3-phosphocholine + (5Z,8Z,11Z,14Z)-eicosatetraenoyl-CoA = 1-dodecanoyl-2-(5Z,8Z,11Z,14Z)-eicosatetraenoyl-sn-glycero-3-phosphocholine + CoA</text>
        <dbReference type="Rhea" id="RHEA:37483"/>
        <dbReference type="ChEBI" id="CHEBI:57287"/>
        <dbReference type="ChEBI" id="CHEBI:57368"/>
        <dbReference type="ChEBI" id="CHEBI:74966"/>
        <dbReference type="ChEBI" id="CHEBI:74967"/>
    </reaction>
    <physiologicalReaction direction="left-to-right" evidence="12">
        <dbReference type="Rhea" id="RHEA:37484"/>
    </physiologicalReaction>
</comment>
<comment type="catalytic activity">
    <reaction evidence="4 7">
        <text>(5Z,8Z,11Z,14Z)-eicosatetraenoyl-CoA + 1-hexadecanoyl-sn-glycero-3-phosphocholine = 1-hexadecanoyl-2-(5Z,8Z,11Z,14Z-eicosatetraenoyl)-sn-glycero-3-phosphocholine + CoA</text>
        <dbReference type="Rhea" id="RHEA:35999"/>
        <dbReference type="ChEBI" id="CHEBI:57287"/>
        <dbReference type="ChEBI" id="CHEBI:57368"/>
        <dbReference type="ChEBI" id="CHEBI:72998"/>
        <dbReference type="ChEBI" id="CHEBI:73003"/>
    </reaction>
    <physiologicalReaction direction="left-to-right" evidence="12 13">
        <dbReference type="Rhea" id="RHEA:36000"/>
    </physiologicalReaction>
</comment>
<comment type="catalytic activity">
    <reaction evidence="4 7">
        <text>1-octadecanoyl-sn-glycero-3-phosphocholine + (5Z,8Z,11Z,14Z)-eicosatetraenoyl-CoA = 1-octadecanoyl-2-(5Z,8Z,11Z,14Z-eicosatetraenoyl)-sn-glycero-3-phosphocholine + CoA</text>
        <dbReference type="Rhea" id="RHEA:37479"/>
        <dbReference type="ChEBI" id="CHEBI:57287"/>
        <dbReference type="ChEBI" id="CHEBI:57368"/>
        <dbReference type="ChEBI" id="CHEBI:73858"/>
        <dbReference type="ChEBI" id="CHEBI:74965"/>
    </reaction>
    <physiologicalReaction direction="left-to-right" evidence="12 13">
        <dbReference type="Rhea" id="RHEA:37480"/>
    </physiologicalReaction>
</comment>
<comment type="catalytic activity">
    <reaction evidence="4">
        <text>1-eicosanoyl-sn-glycero-3-phosphocholine + (5Z,8Z,11Z,14Z)-eicosatetraenoyl-CoA = 1-eicosanoyl-2-(5Z,8Z,11Z,14Z)-eicosatetraenoyl-sn-glycero-3-phosphocholine + CoA</text>
        <dbReference type="Rhea" id="RHEA:37487"/>
        <dbReference type="ChEBI" id="CHEBI:57287"/>
        <dbReference type="ChEBI" id="CHEBI:57368"/>
        <dbReference type="ChEBI" id="CHEBI:74968"/>
        <dbReference type="ChEBI" id="CHEBI:74970"/>
    </reaction>
    <physiologicalReaction direction="left-to-right" evidence="12">
        <dbReference type="Rhea" id="RHEA:37488"/>
    </physiologicalReaction>
</comment>
<comment type="catalytic activity">
    <reaction evidence="2">
        <text>1-(9Z-octadecenoyl)-sn-glycero-3-phosphocholine + (9Z)-octadecenoyl-CoA = 1,2-di-(9Z-octadecenoyl)-sn-glycero-3-phosphocholine + CoA</text>
        <dbReference type="Rhea" id="RHEA:37387"/>
        <dbReference type="ChEBI" id="CHEBI:28610"/>
        <dbReference type="ChEBI" id="CHEBI:57287"/>
        <dbReference type="ChEBI" id="CHEBI:57387"/>
        <dbReference type="ChEBI" id="CHEBI:74669"/>
    </reaction>
    <physiologicalReaction direction="left-to-right" evidence="2">
        <dbReference type="Rhea" id="RHEA:37388"/>
    </physiologicalReaction>
</comment>
<comment type="catalytic activity">
    <reaction evidence="2">
        <text>1-(9Z-octadecenoyl)-sn-glycero-3-phosphocholine + (9Z,12Z)-octadecadienoyl-CoA = 1-(9Z)-octadecenoyl-2-(9Z,12Z)-octadecadienoyl-sn-glycero-3-phosphocholine + CoA</text>
        <dbReference type="Rhea" id="RHEA:37391"/>
        <dbReference type="ChEBI" id="CHEBI:28610"/>
        <dbReference type="ChEBI" id="CHEBI:57287"/>
        <dbReference type="ChEBI" id="CHEBI:57383"/>
        <dbReference type="ChEBI" id="CHEBI:74670"/>
    </reaction>
    <physiologicalReaction direction="left-to-right" evidence="2">
        <dbReference type="Rhea" id="RHEA:37392"/>
    </physiologicalReaction>
</comment>
<comment type="catalytic activity">
    <reaction evidence="4">
        <text>1-(9Z-octadecenoyl)-sn-glycero-3-phosphocholine + (5Z,8Z,11Z,14Z)-eicosatetraenoyl-CoA = 1-(9Z)-octadecenoyl-2-(5Z,8Z,11Z,14Z)-icosatetraenoyl-sn-glycero-3-phosphocholine + CoA</text>
        <dbReference type="Rhea" id="RHEA:37395"/>
        <dbReference type="ChEBI" id="CHEBI:28610"/>
        <dbReference type="ChEBI" id="CHEBI:57287"/>
        <dbReference type="ChEBI" id="CHEBI:57368"/>
        <dbReference type="ChEBI" id="CHEBI:74671"/>
    </reaction>
    <physiologicalReaction direction="left-to-right" evidence="12">
        <dbReference type="Rhea" id="RHEA:37396"/>
    </physiologicalReaction>
</comment>
<comment type="catalytic activity">
    <reaction evidence="2">
        <text>a 1-acyl-sn-glycero-3-phosphoethanolamine + (9Z,12Z)-octadecadienoyl-CoA = 1-acyl-2-(9Z,12Z)-octadecadienoyl-sn-glycero-3-phosphoethanolamine + CoA</text>
        <dbReference type="Rhea" id="RHEA:37579"/>
        <dbReference type="ChEBI" id="CHEBI:57287"/>
        <dbReference type="ChEBI" id="CHEBI:57383"/>
        <dbReference type="ChEBI" id="CHEBI:64381"/>
        <dbReference type="ChEBI" id="CHEBI:75069"/>
    </reaction>
    <physiologicalReaction direction="left-to-right" evidence="2">
        <dbReference type="Rhea" id="RHEA:37580"/>
    </physiologicalReaction>
</comment>
<comment type="catalytic activity">
    <reaction evidence="4">
        <text>1-(9Z-octadecenoyl)-sn-glycero-3-phosphoethanolamine + (9Z,12Z)-octadecadienoyl-CoA = 1-(9Z)-octadecenoyl-2-(9Z,12Z)-octadecadienoyl-sn-glycero-3-phosphoethanolamine + CoA</text>
        <dbReference type="Rhea" id="RHEA:37503"/>
        <dbReference type="ChEBI" id="CHEBI:57287"/>
        <dbReference type="ChEBI" id="CHEBI:57383"/>
        <dbReference type="ChEBI" id="CHEBI:74971"/>
        <dbReference type="ChEBI" id="CHEBI:74977"/>
    </reaction>
    <physiologicalReaction direction="left-to-right" evidence="12">
        <dbReference type="Rhea" id="RHEA:37504"/>
    </physiologicalReaction>
</comment>
<comment type="catalytic activity">
    <reaction evidence="7">
        <text>1-(10Z-heptadecenoyl)-sn-glycero-3-phosphoethanolamine + (9Z,12Z)-octadecadienoyl-CoA = 1-(10Z-heptadecenoyl)-2-(9Z,12Z-octadecadienoyl)-sn-glycero-3-phosphoethanolamine + CoA</text>
        <dbReference type="Rhea" id="RHEA:64228"/>
        <dbReference type="ChEBI" id="CHEBI:57287"/>
        <dbReference type="ChEBI" id="CHEBI:57383"/>
        <dbReference type="ChEBI" id="CHEBI:149768"/>
        <dbReference type="ChEBI" id="CHEBI:149770"/>
    </reaction>
    <physiologicalReaction direction="left-to-right" evidence="13">
        <dbReference type="Rhea" id="RHEA:64229"/>
    </physiologicalReaction>
</comment>
<comment type="catalytic activity">
    <reaction evidence="2">
        <text>a 1-acyl-sn-glycero-3-phosphoethanolamine + (5Z,8Z,11Z,14Z)-eicosatetraenoyl-CoA = 1-acyl-2-(5Z,8Z,11Z,14Z)-eicosatetraenoyl-sn-glycero-3-phosphoethanolamine + CoA</text>
        <dbReference type="Rhea" id="RHEA:37575"/>
        <dbReference type="ChEBI" id="CHEBI:57287"/>
        <dbReference type="ChEBI" id="CHEBI:57368"/>
        <dbReference type="ChEBI" id="CHEBI:64381"/>
        <dbReference type="ChEBI" id="CHEBI:75067"/>
    </reaction>
    <physiologicalReaction direction="left-to-right" evidence="2">
        <dbReference type="Rhea" id="RHEA:37576"/>
    </physiologicalReaction>
</comment>
<comment type="catalytic activity">
    <reaction evidence="4">
        <text>1-hexadecanoyl-sn-glycero-3-phosphoethanolamine + (5Z,8Z,11Z,14Z)-eicosatetraenoyl-CoA = 1-hexadecanoyl-2-(5Z,8Z,11Z,14Z-eicosatetraenoyl)-sn-glycero-3-phosphoethanolamine + CoA</text>
        <dbReference type="Rhea" id="RHEA:36023"/>
        <dbReference type="ChEBI" id="CHEBI:57287"/>
        <dbReference type="ChEBI" id="CHEBI:57368"/>
        <dbReference type="ChEBI" id="CHEBI:73004"/>
        <dbReference type="ChEBI" id="CHEBI:73009"/>
    </reaction>
    <physiologicalReaction direction="left-to-right" evidence="12">
        <dbReference type="Rhea" id="RHEA:36024"/>
    </physiologicalReaction>
</comment>
<comment type="catalytic activity">
    <reaction evidence="4">
        <text>1-(9Z-octadecenoyl)-sn-glycero-3-phosphoethanolamine + (5Z,8Z,11Z,14Z)-eicosatetraenoyl-CoA = 1-(9Z)-octadecenoyl-2-(5Z,8Z,11Z,14Z)-eicosatetraenoyl-sn-glycero-3-phosphoethanolamine + CoA</text>
        <dbReference type="Rhea" id="RHEA:37495"/>
        <dbReference type="ChEBI" id="CHEBI:57287"/>
        <dbReference type="ChEBI" id="CHEBI:57368"/>
        <dbReference type="ChEBI" id="CHEBI:74971"/>
        <dbReference type="ChEBI" id="CHEBI:74975"/>
    </reaction>
    <physiologicalReaction direction="left-to-right" evidence="12">
        <dbReference type="Rhea" id="RHEA:37496"/>
    </physiologicalReaction>
</comment>
<comment type="catalytic activity">
    <reaction evidence="7">
        <text>1-(10Z-heptadecenoyl)-sn-glycero-3-phosphoethanolamine + (5Z,8Z,11Z,14Z)-eicosatetraenoyl-CoA = 1-(10Z-heptadecenoyl)-2-(5Z,8Z,11Z,14Z-eicosatetraenoyl)-sn-glycero-3-phosphoethanolamine + CoA</text>
        <dbReference type="Rhea" id="RHEA:64204"/>
        <dbReference type="ChEBI" id="CHEBI:57287"/>
        <dbReference type="ChEBI" id="CHEBI:57368"/>
        <dbReference type="ChEBI" id="CHEBI:149768"/>
        <dbReference type="ChEBI" id="CHEBI:149769"/>
    </reaction>
    <physiologicalReaction direction="left-to-right" evidence="13">
        <dbReference type="Rhea" id="RHEA:64205"/>
    </physiologicalReaction>
</comment>
<comment type="catalytic activity">
    <reaction evidence="4">
        <text>a 1-O-(1Z-alkenyl)-sn-glycero-3-phosphoethanolamine + (5Z,8Z,11Z,14Z)-eicosatetraenoyl-CoA = 1-O-(1Z)-alkenyl-2-(5Z,8Z,11Z,14Z)-eicosatetraenoyl-sn-glycero-3-phosphoethanolamine + CoA</text>
        <dbReference type="Rhea" id="RHEA:37635"/>
        <dbReference type="ChEBI" id="CHEBI:57287"/>
        <dbReference type="ChEBI" id="CHEBI:57368"/>
        <dbReference type="ChEBI" id="CHEBI:77288"/>
        <dbReference type="ChEBI" id="CHEBI:77295"/>
    </reaction>
    <physiologicalReaction direction="left-to-right" evidence="12">
        <dbReference type="Rhea" id="RHEA:37636"/>
    </physiologicalReaction>
</comment>
<comment type="catalytic activity">
    <reaction evidence="2">
        <text>a 1-acyl-sn-glycero-3-phospho-L-serine + (9Z,12Z)-octadecadienoyl-CoA = 1-acyl-2-(9Z,12Z-octadecadienoyl)-sn-glycero-3-phospho-L-serine + CoA</text>
        <dbReference type="Rhea" id="RHEA:37567"/>
        <dbReference type="ChEBI" id="CHEBI:57287"/>
        <dbReference type="ChEBI" id="CHEBI:57383"/>
        <dbReference type="ChEBI" id="CHEBI:64379"/>
        <dbReference type="ChEBI" id="CHEBI:75066"/>
    </reaction>
    <physiologicalReaction direction="left-to-right" evidence="2">
        <dbReference type="Rhea" id="RHEA:37568"/>
    </physiologicalReaction>
</comment>
<comment type="catalytic activity">
    <reaction evidence="2">
        <text>a 1-acyl-sn-glycero-3-phospho-L-serine + (5Z,8Z,11Z,14Z)-eicosatetraenoyl-CoA = 1-acyl-2-(5Z,8Z,11Z,14Z-eicosatetraenoyl)-sn-glycero-3-phospho-L-serine + CoA</text>
        <dbReference type="Rhea" id="RHEA:37571"/>
        <dbReference type="ChEBI" id="CHEBI:57287"/>
        <dbReference type="ChEBI" id="CHEBI:57368"/>
        <dbReference type="ChEBI" id="CHEBI:64379"/>
        <dbReference type="ChEBI" id="CHEBI:75065"/>
    </reaction>
    <physiologicalReaction direction="left-to-right" evidence="2">
        <dbReference type="Rhea" id="RHEA:37572"/>
    </physiologicalReaction>
</comment>
<comment type="catalytic activity">
    <reaction evidence="2">
        <text>1-hexadecanoyl-sn-glycero-3-phospho-L-serine + (9Z)-octadecenoyl-CoA = 1-hexadecanoyl-2-(9Z-octadecenoyl)-sn-glycero-3-phospho-L-serine + CoA</text>
        <dbReference type="Rhea" id="RHEA:37531"/>
        <dbReference type="ChEBI" id="CHEBI:57287"/>
        <dbReference type="ChEBI" id="CHEBI:57387"/>
        <dbReference type="ChEBI" id="CHEBI:75020"/>
        <dbReference type="ChEBI" id="CHEBI:75029"/>
    </reaction>
    <physiologicalReaction direction="left-to-right" evidence="2">
        <dbReference type="Rhea" id="RHEA:37532"/>
    </physiologicalReaction>
</comment>
<comment type="catalytic activity">
    <reaction evidence="4">
        <text>1-(9Z-octadecenoyl)-sn-glycero-3-phospho-L-serine + (9Z)-octadecenoyl-CoA = 1,2-di-(9Z)-octadecenoyl-sn-glycero-3-phospho-L-serine + CoA</text>
        <dbReference type="Rhea" id="RHEA:37407"/>
        <dbReference type="ChEBI" id="CHEBI:57287"/>
        <dbReference type="ChEBI" id="CHEBI:57387"/>
        <dbReference type="ChEBI" id="CHEBI:74617"/>
        <dbReference type="ChEBI" id="CHEBI:74905"/>
    </reaction>
    <physiologicalReaction direction="left-to-right" evidence="12">
        <dbReference type="Rhea" id="RHEA:37408"/>
    </physiologicalReaction>
</comment>
<comment type="catalytic activity">
    <reaction evidence="2">
        <text>1-hexadecanoyl-sn-glycero-3-phospho-L-serine + (9Z,12Z)-octadecadienoyl-CoA = 1-hexadecanoyl-2-(9Z,12Z-octadecadienoyl)-sn-glycero-3-phospho-L-serine + CoA</text>
        <dbReference type="Rhea" id="RHEA:37535"/>
        <dbReference type="ChEBI" id="CHEBI:57287"/>
        <dbReference type="ChEBI" id="CHEBI:57383"/>
        <dbReference type="ChEBI" id="CHEBI:75020"/>
        <dbReference type="ChEBI" id="CHEBI:75031"/>
    </reaction>
    <physiologicalReaction direction="left-to-right" evidence="2">
        <dbReference type="Rhea" id="RHEA:37536"/>
    </physiologicalReaction>
</comment>
<comment type="catalytic activity">
    <reaction evidence="4">
        <text>1-(9Z-octadecenoyl)-sn-glycero-3-phospho-L-serine + (9Z,12Z)-octadecadienoyl-CoA = 1-(9Z-octadecenoyl)-2-(9Z,12Z-octadienoyl)-sn-glycero-3-phospho-L-serine + CoA</text>
        <dbReference type="Rhea" id="RHEA:37375"/>
        <dbReference type="ChEBI" id="CHEBI:57287"/>
        <dbReference type="ChEBI" id="CHEBI:57383"/>
        <dbReference type="ChEBI" id="CHEBI:74617"/>
        <dbReference type="ChEBI" id="CHEBI:74892"/>
    </reaction>
    <physiologicalReaction direction="left-to-right" evidence="12">
        <dbReference type="Rhea" id="RHEA:37376"/>
    </physiologicalReaction>
</comment>
<comment type="catalytic activity">
    <reaction evidence="2">
        <text>1-hexadecanoyl-sn-glycero-3-phospho-L-serine + (5Z,8Z,11Z,14Z)-eicosatetraenoyl-CoA = 1-hexadecanoyl-2-(5Z,8Z,11Z,14Z-eicosatetraenoyl)-sn-glycero-3-phospho-L-serine + CoA</text>
        <dbReference type="Rhea" id="RHEA:37539"/>
        <dbReference type="ChEBI" id="CHEBI:57287"/>
        <dbReference type="ChEBI" id="CHEBI:57368"/>
        <dbReference type="ChEBI" id="CHEBI:75020"/>
        <dbReference type="ChEBI" id="CHEBI:75032"/>
    </reaction>
    <physiologicalReaction direction="left-to-right" evidence="2">
        <dbReference type="Rhea" id="RHEA:37540"/>
    </physiologicalReaction>
</comment>
<comment type="catalytic activity">
    <reaction evidence="4">
        <text>1-(9Z-octadecenoyl)-sn-glycero-3-phospho-L-serine + (5Z,8Z,11Z,14Z)-eicosatetraenoyl-CoA = 1-(9Z-octadecenoyl)-2-(5Z,8Z,11Z,14Z-eicosatetraenoyl)-sn-glycero-3-phospho-L-serine + CoA</text>
        <dbReference type="Rhea" id="RHEA:37379"/>
        <dbReference type="ChEBI" id="CHEBI:57287"/>
        <dbReference type="ChEBI" id="CHEBI:57368"/>
        <dbReference type="ChEBI" id="CHEBI:74617"/>
        <dbReference type="ChEBI" id="CHEBI:74897"/>
    </reaction>
    <physiologicalReaction direction="left-to-right" evidence="12">
        <dbReference type="Rhea" id="RHEA:37380"/>
    </physiologicalReaction>
</comment>
<comment type="biophysicochemical properties">
    <kinetics>
        <KM evidence="4">7.8 uM for arachidonoyl-CoA (in the presence of LPC C16:0 as cosubstrate)</KM>
        <KM evidence="4">44.1 uM for arachidonoyl-CoA (in the presence of LPE C18:1 as cosubstrate)</KM>
        <KM evidence="4">28 uM for arachidonoyl-CoA (in the presence of LPS C18:1 as cosubstrate)</KM>
        <KM evidence="4">34.5 uM for LPC C16:0 (in the presence of arachidonoyl-CoA as cosubstrate)</KM>
        <KM evidence="4">29.7 uM for LPE C18:1 (in the presence of arachidonoyl-CoA as cosubstrate)</KM>
        <KM evidence="4">22.3 uM for LPS C18:1 (in the presence of arachidonoyl-CoA as cosubstrate)</KM>
        <Vmax evidence="4">1085.5 nmol/min/mg enzyme with arachidonoyl-CoA and LPC C16:0 as substrates</Vmax>
        <Vmax evidence="4">389.25 nmol/min/mg enzyme with arachidonoyl-CoA and LPE C18:1 as substrates</Vmax>
        <Vmax evidence="4">335.75 nmol/min/mg enzyme with arachidonoyl-CoA and LPS C18:1 as substrates</Vmax>
    </kinetics>
</comment>
<comment type="pathway">
    <text evidence="4 7">Lipid metabolism; phospholipid metabolism.</text>
</comment>
<comment type="subcellular location">
    <subcellularLocation>
        <location evidence="4">Endoplasmic reticulum membrane</location>
        <topology evidence="3">Multi-pass membrane protein</topology>
    </subcellularLocation>
</comment>
<comment type="tissue specificity">
    <text evidence="4 5 6 7 9">Detected ubiquitously, with high expression levels in small intestine, brown adipose tissue, liver, kidney and testis (PubMed:18287005, PubMed:24206663, PubMed:25806685, PubMed:25898003, PubMed:28846071). Expressed in liver and both proximal and distal small intestine (at protein level) (PubMed:25898003). Expressed in peritoneal macrophages (PubMed:24206663).</text>
</comment>
<comment type="developmental stage">
    <text evidence="7">Expressed at late embryonic stages between 18.5 and 19.5 dpc in intestine and liver.</text>
</comment>
<comment type="induction">
    <text evidence="5 6 7 9">Up-regulated in response to liver X receptor/NR1H3 or NR1H2 agonist GW3965 (PubMed:24206663, PubMed:25806685, PubMed:25898003, PubMed:28846071). Up-regulated in peritoneal macrophages upon exposure to 22(R)-hydroxycholesterol (PubMed:24206663).</text>
</comment>
<comment type="domain">
    <text evidence="1">The di-lysine motif confers endoplasmic reticulum localization.</text>
</comment>
<comment type="disruption phenotype">
    <text evidence="6 7 10">Mutant mice are born at the expected Mendelian frequency, but none survives beyond day 2 due to an extensive triacylglycerol accumulation in enterocytes associated with very low blood glucose levels at birth (P1.5) (PubMed:25806685, PubMed:25898003). Conditional knockdown in intestine results in hyperproliferation of the intestinal crypt and increased susceptibility to intestinal tumorigenesis (PubMed:29395055).</text>
</comment>
<comment type="similarity">
    <text evidence="3">Belongs to the membrane-bound acyltransferase family.</text>
</comment>
<protein>
    <recommendedName>
        <fullName>Lysophospholipid acyltransferase 5</fullName>
        <shortName>LPLAT 5</shortName>
        <ecNumber evidence="4 7">2.3.1.-</ecNumber>
    </recommendedName>
    <alternativeName>
        <fullName>1-acylglycerophosphocholine O-acyltransferase</fullName>
        <ecNumber evidence="4 7">2.3.1.23</ecNumber>
    </alternativeName>
    <alternativeName>
        <fullName>1-acylglycerophosphoethanolamine O-acyltransferase</fullName>
        <ecNumber evidence="4">2.3.1.n7</ecNumber>
    </alternativeName>
    <alternativeName>
        <fullName>1-acylglycerophosphoserine O-acyltransferase</fullName>
        <ecNumber evidence="4">2.3.1.n6</ecNumber>
    </alternativeName>
    <alternativeName>
        <fullName>Lysophosphatidylcholine acyltransferase</fullName>
        <shortName>LPCAT</shortName>
        <shortName>Lyso-PC acyltransferase</shortName>
    </alternativeName>
    <alternativeName>
        <fullName>Lysophosphatidylcholine acyltransferase 3</fullName>
        <shortName>Lyso-PC acyltransferase 3</shortName>
        <shortName>mLPCAT3</shortName>
    </alternativeName>
    <alternativeName>
        <fullName>Lysophosphatidylethanolamine acyltransferase</fullName>
        <shortName>LPEAT</shortName>
        <shortName>Lyso-PE acyltransferase</shortName>
    </alternativeName>
    <alternativeName>
        <fullName>Lysophosphatidylserine acyltransferase</fullName>
        <shortName>LPSAT</shortName>
        <shortName>Lyso-PS acyltransferase</shortName>
    </alternativeName>
    <alternativeName>
        <fullName>Membrane-bound O-acyltransferase domain-containing protein 5</fullName>
        <shortName>O-acyltransferase domain-containing protein 5</shortName>
    </alternativeName>
</protein>
<dbReference type="EC" id="2.3.1.-" evidence="4 7"/>
<dbReference type="EC" id="2.3.1.23" evidence="4 7"/>
<dbReference type="EC" id="2.3.1.n7" evidence="4"/>
<dbReference type="EC" id="2.3.1.n6" evidence="4"/>
<dbReference type="EMBL" id="AY028317">
    <property type="protein sequence ID" value="AAK20915.1"/>
    <property type="molecule type" value="mRNA"/>
</dbReference>
<dbReference type="EMBL" id="AB294194">
    <property type="protein sequence ID" value="BAG12120.1"/>
    <property type="molecule type" value="mRNA"/>
</dbReference>
<dbReference type="EMBL" id="CH466523">
    <property type="protein sequence ID" value="EDK99746.1"/>
    <property type="molecule type" value="Genomic_DNA"/>
</dbReference>
<dbReference type="EMBL" id="BC006753">
    <property type="protein sequence ID" value="AAH06753.2"/>
    <property type="molecule type" value="mRNA"/>
</dbReference>
<dbReference type="EMBL" id="AC002397">
    <property type="protein sequence ID" value="AAC36007.1"/>
    <property type="molecule type" value="Genomic_DNA"/>
</dbReference>
<dbReference type="EMBL" id="AK083687">
    <property type="protein sequence ID" value="BAC38993.1"/>
    <property type="molecule type" value="mRNA"/>
</dbReference>
<dbReference type="CCDS" id="CCDS20523.1"/>
<dbReference type="RefSeq" id="NP_660112.1">
    <property type="nucleotide sequence ID" value="NM_145130.3"/>
</dbReference>
<dbReference type="SMR" id="Q91V01"/>
<dbReference type="BioGRID" id="200053">
    <property type="interactions" value="5"/>
</dbReference>
<dbReference type="FunCoup" id="Q91V01">
    <property type="interactions" value="816"/>
</dbReference>
<dbReference type="IntAct" id="Q91V01">
    <property type="interactions" value="1"/>
</dbReference>
<dbReference type="MINT" id="Q91V01"/>
<dbReference type="STRING" id="10090.ENSMUSP00000004381"/>
<dbReference type="ChEMBL" id="CHEMBL1255159"/>
<dbReference type="SwissLipids" id="SLP:000000286"/>
<dbReference type="GlyCosmos" id="Q91V01">
    <property type="glycosylation" value="3 sites, No reported glycans"/>
</dbReference>
<dbReference type="GlyGen" id="Q91V01">
    <property type="glycosylation" value="3 sites"/>
</dbReference>
<dbReference type="iPTMnet" id="Q91V01"/>
<dbReference type="PhosphoSitePlus" id="Q91V01"/>
<dbReference type="SwissPalm" id="Q91V01"/>
<dbReference type="jPOST" id="Q91V01"/>
<dbReference type="PaxDb" id="10090-ENSMUSP00000004381"/>
<dbReference type="PeptideAtlas" id="Q91V01"/>
<dbReference type="ProteomicsDB" id="295971"/>
<dbReference type="Pumba" id="Q91V01"/>
<dbReference type="Antibodypedia" id="67641">
    <property type="antibodies" value="74 antibodies from 12 providers"/>
</dbReference>
<dbReference type="DNASU" id="14792"/>
<dbReference type="Ensembl" id="ENSMUST00000004381.14">
    <property type="protein sequence ID" value="ENSMUSP00000004381.8"/>
    <property type="gene ID" value="ENSMUSG00000004270.14"/>
</dbReference>
<dbReference type="GeneID" id="14792"/>
<dbReference type="KEGG" id="mmu:14792"/>
<dbReference type="UCSC" id="uc009drf.2">
    <property type="organism name" value="mouse"/>
</dbReference>
<dbReference type="AGR" id="MGI:1315211"/>
<dbReference type="CTD" id="10162"/>
<dbReference type="MGI" id="MGI:1315211">
    <property type="gene designation" value="Lpcat3"/>
</dbReference>
<dbReference type="VEuPathDB" id="HostDB:ENSMUSG00000004270"/>
<dbReference type="eggNOG" id="KOG2705">
    <property type="taxonomic scope" value="Eukaryota"/>
</dbReference>
<dbReference type="GeneTree" id="ENSGT01030000234564"/>
<dbReference type="HOGENOM" id="CLU_011340_6_1_1"/>
<dbReference type="InParanoid" id="Q91V01"/>
<dbReference type="OMA" id="NAWVSRY"/>
<dbReference type="OrthoDB" id="5974730at2759"/>
<dbReference type="PhylomeDB" id="Q91V01"/>
<dbReference type="TreeFam" id="TF106143"/>
<dbReference type="BRENDA" id="2.3.1.23">
    <property type="organism ID" value="3474"/>
</dbReference>
<dbReference type="Reactome" id="R-MMU-1482788">
    <property type="pathway name" value="Acyl chain remodelling of PC"/>
</dbReference>
<dbReference type="Reactome" id="R-MMU-1482801">
    <property type="pathway name" value="Acyl chain remodelling of PS"/>
</dbReference>
<dbReference type="Reactome" id="R-MMU-1482839">
    <property type="pathway name" value="Acyl chain remodelling of PE"/>
</dbReference>
<dbReference type="UniPathway" id="UPA00085"/>
<dbReference type="BioGRID-ORCS" id="14792">
    <property type="hits" value="3 hits in 80 CRISPR screens"/>
</dbReference>
<dbReference type="ChiTaRS" id="Lpcat3">
    <property type="organism name" value="mouse"/>
</dbReference>
<dbReference type="PRO" id="PR:Q91V01"/>
<dbReference type="Proteomes" id="UP000000589">
    <property type="component" value="Chromosome 6"/>
</dbReference>
<dbReference type="RNAct" id="Q91V01">
    <property type="molecule type" value="protein"/>
</dbReference>
<dbReference type="Bgee" id="ENSMUSG00000004270">
    <property type="expression patterns" value="Expressed in yolk sac and 258 other cell types or tissues"/>
</dbReference>
<dbReference type="ExpressionAtlas" id="Q91V01">
    <property type="expression patterns" value="baseline and differential"/>
</dbReference>
<dbReference type="GO" id="GO:0005789">
    <property type="term" value="C:endoplasmic reticulum membrane"/>
    <property type="evidence" value="ECO:0000314"/>
    <property type="project" value="UniProtKB"/>
</dbReference>
<dbReference type="GO" id="GO:0047184">
    <property type="term" value="F:1-acylglycerophosphocholine O-acyltransferase activity"/>
    <property type="evidence" value="ECO:0000314"/>
    <property type="project" value="UniProtKB"/>
</dbReference>
<dbReference type="GO" id="GO:0106262">
    <property type="term" value="F:1-acylglycerophosphoethanolamine O-acyltransferase activity"/>
    <property type="evidence" value="ECO:0000314"/>
    <property type="project" value="UniProtKB"/>
</dbReference>
<dbReference type="GO" id="GO:0106263">
    <property type="term" value="F:1-acylglycerophosphoserine O-acyltransferase activity"/>
    <property type="evidence" value="ECO:0000314"/>
    <property type="project" value="UniProtKB"/>
</dbReference>
<dbReference type="GO" id="GO:0034378">
    <property type="term" value="P:chylomicron assembly"/>
    <property type="evidence" value="ECO:0000315"/>
    <property type="project" value="UniProtKB"/>
</dbReference>
<dbReference type="GO" id="GO:0090158">
    <property type="term" value="P:endoplasmic reticulum membrane organization"/>
    <property type="evidence" value="ECO:0000315"/>
    <property type="project" value="UniProtKB"/>
</dbReference>
<dbReference type="GO" id="GO:0036335">
    <property type="term" value="P:intestinal stem cell homeostasis"/>
    <property type="evidence" value="ECO:0000315"/>
    <property type="project" value="UniProtKB"/>
</dbReference>
<dbReference type="GO" id="GO:0050728">
    <property type="term" value="P:negative regulation of inflammatory response"/>
    <property type="evidence" value="ECO:0000315"/>
    <property type="project" value="UniProtKB"/>
</dbReference>
<dbReference type="GO" id="GO:1903573">
    <property type="term" value="P:negative regulation of response to endoplasmic reticulum stress"/>
    <property type="evidence" value="ECO:0000314"/>
    <property type="project" value="UniProtKB"/>
</dbReference>
<dbReference type="GO" id="GO:0036151">
    <property type="term" value="P:phosphatidylcholine acyl-chain remodeling"/>
    <property type="evidence" value="ECO:0000315"/>
    <property type="project" value="UniProtKB"/>
</dbReference>
<dbReference type="GO" id="GO:0036152">
    <property type="term" value="P:phosphatidylethanolamine acyl-chain remodeling"/>
    <property type="evidence" value="ECO:0000315"/>
    <property type="project" value="UniProtKB"/>
</dbReference>
<dbReference type="GO" id="GO:0036150">
    <property type="term" value="P:phosphatidylserine acyl-chain remodeling"/>
    <property type="evidence" value="ECO:0000315"/>
    <property type="project" value="UniProtKB"/>
</dbReference>
<dbReference type="GO" id="GO:0008654">
    <property type="term" value="P:phospholipid biosynthetic process"/>
    <property type="evidence" value="ECO:0007669"/>
    <property type="project" value="UniProtKB-KW"/>
</dbReference>
<dbReference type="GO" id="GO:0045797">
    <property type="term" value="P:positive regulation of intestinal cholesterol absorption"/>
    <property type="evidence" value="ECO:0000315"/>
    <property type="project" value="UniProtKB"/>
</dbReference>
<dbReference type="GO" id="GO:1905885">
    <property type="term" value="P:positive regulation of triglyceride transport"/>
    <property type="evidence" value="ECO:0000315"/>
    <property type="project" value="UniProtKB"/>
</dbReference>
<dbReference type="GO" id="GO:0045540">
    <property type="term" value="P:regulation of cholesterol biosynthetic process"/>
    <property type="evidence" value="ECO:0000315"/>
    <property type="project" value="UniProtKB"/>
</dbReference>
<dbReference type="GO" id="GO:0097006">
    <property type="term" value="P:regulation of plasma lipoprotein particle levels"/>
    <property type="evidence" value="ECO:0000315"/>
    <property type="project" value="MGI"/>
</dbReference>
<dbReference type="GO" id="GO:0034379">
    <property type="term" value="P:very-low-density lipoprotein particle assembly"/>
    <property type="evidence" value="ECO:0000315"/>
    <property type="project" value="UniProtKB"/>
</dbReference>
<dbReference type="InterPro" id="IPR049941">
    <property type="entry name" value="LPLAT_7/PORCN-like"/>
</dbReference>
<dbReference type="InterPro" id="IPR004299">
    <property type="entry name" value="MBOAT_fam"/>
</dbReference>
<dbReference type="PANTHER" id="PTHR13906:SF14">
    <property type="entry name" value="LYSOPHOSPHOLIPID ACYLTRANSFERASE 5"/>
    <property type="match status" value="1"/>
</dbReference>
<dbReference type="PANTHER" id="PTHR13906">
    <property type="entry name" value="PORCUPINE"/>
    <property type="match status" value="1"/>
</dbReference>
<dbReference type="Pfam" id="PF03062">
    <property type="entry name" value="MBOAT"/>
    <property type="match status" value="1"/>
</dbReference>